<sequence length="212" mass="24249">MKYNIVHGICLLFAITQAVGAVHFYAKSGETKCFYEHLSRGNLLIGDLDLYVEKDGLFEEDPESSLTITVDETFDNDHRVLNQKNSHTGDVTFTALDTGEHRFCFTPFYSKKSATLRVFIELEIGNVEALDSKKKEDMNSLKGRVGQLTQRLSSIRKEQDAIREKEAEFRNQSESANSKIMTWSVFQLLILLGTCAFQLRYLKNFFVKQKVV</sequence>
<reference key="1">
    <citation type="journal article" date="1994" name="Science">
        <title>Complete nucleotide sequence of Saccharomyces cerevisiae chromosome VIII.</title>
        <authorList>
            <person name="Johnston M."/>
            <person name="Andrews S."/>
            <person name="Brinkman R."/>
            <person name="Cooper J."/>
            <person name="Ding H."/>
            <person name="Dover J."/>
            <person name="Du Z."/>
            <person name="Favello A."/>
            <person name="Fulton L."/>
            <person name="Gattung S."/>
            <person name="Geisel C."/>
            <person name="Kirsten J."/>
            <person name="Kucaba T."/>
            <person name="Hillier L.W."/>
            <person name="Jier M."/>
            <person name="Johnston L."/>
            <person name="Langston Y."/>
            <person name="Latreille P."/>
            <person name="Louis E.J."/>
            <person name="Macri C."/>
            <person name="Mardis E."/>
            <person name="Menezes S."/>
            <person name="Mouser L."/>
            <person name="Nhan M."/>
            <person name="Rifkin L."/>
            <person name="Riles L."/>
            <person name="St Peter H."/>
            <person name="Trevaskis E."/>
            <person name="Vaughan K."/>
            <person name="Vignati D."/>
            <person name="Wilcox L."/>
            <person name="Wohldman P."/>
            <person name="Waterston R."/>
            <person name="Wilson R."/>
            <person name="Vaudin M."/>
        </authorList>
    </citation>
    <scope>NUCLEOTIDE SEQUENCE [LARGE SCALE GENOMIC DNA]</scope>
    <source>
        <strain>ATCC 204508 / S288c</strain>
    </source>
</reference>
<reference key="2">
    <citation type="journal article" date="2014" name="G3 (Bethesda)">
        <title>The reference genome sequence of Saccharomyces cerevisiae: Then and now.</title>
        <authorList>
            <person name="Engel S.R."/>
            <person name="Dietrich F.S."/>
            <person name="Fisk D.G."/>
            <person name="Binkley G."/>
            <person name="Balakrishnan R."/>
            <person name="Costanzo M.C."/>
            <person name="Dwight S.S."/>
            <person name="Hitz B.C."/>
            <person name="Karra K."/>
            <person name="Nash R.S."/>
            <person name="Weng S."/>
            <person name="Wong E.D."/>
            <person name="Lloyd P."/>
            <person name="Skrzypek M.S."/>
            <person name="Miyasato S.R."/>
            <person name="Simison M."/>
            <person name="Cherry J.M."/>
        </authorList>
    </citation>
    <scope>GENOME REANNOTATION</scope>
    <source>
        <strain>ATCC 204508 / S288c</strain>
    </source>
</reference>
<reference key="3">
    <citation type="journal article" date="1999" name="Mol. Biol. Cell">
        <title>Erp1p and Erp2p, partners for Emp24p and Erv25p in a yeast p24 complex.</title>
        <authorList>
            <person name="Marzioch M."/>
            <person name="Henthorn D.C."/>
            <person name="Herrmann J.M."/>
            <person name="Wilson R."/>
            <person name="Thomas D.Y."/>
            <person name="Bergeron J.J.M."/>
            <person name="Solari R.C."/>
            <person name="Rowley A."/>
        </authorList>
    </citation>
    <scope>GENE NAME</scope>
</reference>
<reference key="4">
    <citation type="journal article" date="2006" name="Proc. Natl. Acad. Sci. U.S.A.">
        <title>A global topology map of the Saccharomyces cerevisiae membrane proteome.</title>
        <authorList>
            <person name="Kim H."/>
            <person name="Melen K."/>
            <person name="Oesterberg M."/>
            <person name="von Heijne G."/>
        </authorList>
    </citation>
    <scope>TOPOLOGY [LARGE SCALE ANALYSIS]</scope>
    <source>
        <strain>ATCC 208353 / W303-1A</strain>
    </source>
</reference>
<proteinExistence type="evidence at protein level"/>
<gene>
    <name type="primary">ERP5</name>
    <name type="ordered locus">YHR110W</name>
</gene>
<evidence type="ECO:0000250" key="1"/>
<evidence type="ECO:0000255" key="2"/>
<evidence type="ECO:0000255" key="3">
    <source>
        <dbReference type="PROSITE-ProRule" id="PRU00096"/>
    </source>
</evidence>
<evidence type="ECO:0000305" key="4"/>
<dbReference type="EMBL" id="U00059">
    <property type="protein sequence ID" value="AAB68853.1"/>
    <property type="molecule type" value="Genomic_DNA"/>
</dbReference>
<dbReference type="EMBL" id="BK006934">
    <property type="protein sequence ID" value="DAA06804.1"/>
    <property type="molecule type" value="Genomic_DNA"/>
</dbReference>
<dbReference type="PIR" id="S48952">
    <property type="entry name" value="S48952"/>
</dbReference>
<dbReference type="RefSeq" id="NP_011978.1">
    <property type="nucleotide sequence ID" value="NM_001179240.1"/>
</dbReference>
<dbReference type="SMR" id="P38819"/>
<dbReference type="BioGRID" id="36543">
    <property type="interactions" value="55"/>
</dbReference>
<dbReference type="DIP" id="DIP-7586N"/>
<dbReference type="ELM" id="P38819"/>
<dbReference type="FunCoup" id="P38819">
    <property type="interactions" value="342"/>
</dbReference>
<dbReference type="IntAct" id="P38819">
    <property type="interactions" value="10"/>
</dbReference>
<dbReference type="MINT" id="P38819"/>
<dbReference type="STRING" id="4932.YHR110W"/>
<dbReference type="GlyCosmos" id="P38819">
    <property type="glycosylation" value="1 site, No reported glycans"/>
</dbReference>
<dbReference type="GlyGen" id="P38819">
    <property type="glycosylation" value="1 site"/>
</dbReference>
<dbReference type="PaxDb" id="4932-YHR110W"/>
<dbReference type="PeptideAtlas" id="P38819"/>
<dbReference type="EnsemblFungi" id="YHR110W_mRNA">
    <property type="protein sequence ID" value="YHR110W"/>
    <property type="gene ID" value="YHR110W"/>
</dbReference>
<dbReference type="GeneID" id="856510"/>
<dbReference type="KEGG" id="sce:YHR110W"/>
<dbReference type="AGR" id="SGD:S000001152"/>
<dbReference type="SGD" id="S000001152">
    <property type="gene designation" value="ERP5"/>
</dbReference>
<dbReference type="VEuPathDB" id="FungiDB:YHR110W"/>
<dbReference type="eggNOG" id="KOG1690">
    <property type="taxonomic scope" value="Eukaryota"/>
</dbReference>
<dbReference type="HOGENOM" id="CLU_066963_2_1_1"/>
<dbReference type="InParanoid" id="P38819"/>
<dbReference type="OMA" id="YYICISC"/>
<dbReference type="OrthoDB" id="3427at2759"/>
<dbReference type="BioCyc" id="YEAST:G3O-31152-MONOMER"/>
<dbReference type="Reactome" id="R-SCE-6807878">
    <property type="pathway name" value="COPI-mediated anterograde transport"/>
</dbReference>
<dbReference type="Reactome" id="R-SCE-6811434">
    <property type="pathway name" value="COPI-dependent Golgi-to-ER retrograde traffic"/>
</dbReference>
<dbReference type="BioGRID-ORCS" id="856510">
    <property type="hits" value="0 hits in 10 CRISPR screens"/>
</dbReference>
<dbReference type="PRO" id="PR:P38819"/>
<dbReference type="Proteomes" id="UP000002311">
    <property type="component" value="Chromosome VIII"/>
</dbReference>
<dbReference type="RNAct" id="P38819">
    <property type="molecule type" value="protein"/>
</dbReference>
<dbReference type="GO" id="GO:0030134">
    <property type="term" value="C:COPII-coated ER to Golgi transport vesicle"/>
    <property type="evidence" value="ECO:0000318"/>
    <property type="project" value="GO_Central"/>
</dbReference>
<dbReference type="GO" id="GO:0005783">
    <property type="term" value="C:endoplasmic reticulum"/>
    <property type="evidence" value="ECO:0007005"/>
    <property type="project" value="SGD"/>
</dbReference>
<dbReference type="GO" id="GO:0005789">
    <property type="term" value="C:endoplasmic reticulum membrane"/>
    <property type="evidence" value="ECO:0007669"/>
    <property type="project" value="UniProtKB-SubCell"/>
</dbReference>
<dbReference type="GO" id="GO:0005793">
    <property type="term" value="C:endoplasmic reticulum-Golgi intermediate compartment"/>
    <property type="evidence" value="ECO:0000318"/>
    <property type="project" value="GO_Central"/>
</dbReference>
<dbReference type="GO" id="GO:0005794">
    <property type="term" value="C:Golgi apparatus"/>
    <property type="evidence" value="ECO:0000318"/>
    <property type="project" value="GO_Central"/>
</dbReference>
<dbReference type="GO" id="GO:0016020">
    <property type="term" value="C:membrane"/>
    <property type="evidence" value="ECO:0000255"/>
    <property type="project" value="SGD"/>
</dbReference>
<dbReference type="GO" id="GO:0006888">
    <property type="term" value="P:endoplasmic reticulum to Golgi vesicle-mediated transport"/>
    <property type="evidence" value="ECO:0000318"/>
    <property type="project" value="GO_Central"/>
</dbReference>
<dbReference type="GO" id="GO:0007030">
    <property type="term" value="P:Golgi organization"/>
    <property type="evidence" value="ECO:0000318"/>
    <property type="project" value="GO_Central"/>
</dbReference>
<dbReference type="GO" id="GO:0006886">
    <property type="term" value="P:intracellular protein transport"/>
    <property type="evidence" value="ECO:0000318"/>
    <property type="project" value="GO_Central"/>
</dbReference>
<dbReference type="GO" id="GO:0016192">
    <property type="term" value="P:vesicle-mediated transport"/>
    <property type="evidence" value="ECO:0000247"/>
    <property type="project" value="SGD"/>
</dbReference>
<dbReference type="InterPro" id="IPR015720">
    <property type="entry name" value="Emp24-like"/>
</dbReference>
<dbReference type="InterPro" id="IPR009038">
    <property type="entry name" value="GOLD_dom"/>
</dbReference>
<dbReference type="PANTHER" id="PTHR22811">
    <property type="entry name" value="TRANSMEMBRANE EMP24 DOMAIN-CONTAINING PROTEIN"/>
    <property type="match status" value="1"/>
</dbReference>
<dbReference type="Pfam" id="PF01105">
    <property type="entry name" value="EMP24_GP25L"/>
    <property type="match status" value="1"/>
</dbReference>
<dbReference type="SMART" id="SM01190">
    <property type="entry name" value="EMP24_GP25L"/>
    <property type="match status" value="1"/>
</dbReference>
<dbReference type="PROSITE" id="PS50866">
    <property type="entry name" value="GOLD"/>
    <property type="match status" value="1"/>
</dbReference>
<feature type="signal peptide" evidence="2">
    <location>
        <begin position="1"/>
        <end position="20"/>
    </location>
</feature>
<feature type="chain" id="PRO_0000010412" description="Protein ERP5">
    <location>
        <begin position="21"/>
        <end position="212"/>
    </location>
</feature>
<feature type="topological domain" description="Lumenal" evidence="2">
    <location>
        <begin position="21"/>
        <end position="178"/>
    </location>
</feature>
<feature type="transmembrane region" description="Helical" evidence="2">
    <location>
        <begin position="179"/>
        <end position="199"/>
    </location>
</feature>
<feature type="topological domain" description="Cytoplasmic" evidence="2">
    <location>
        <begin position="200"/>
        <end position="212"/>
    </location>
</feature>
<feature type="domain" description="GOLD" evidence="3">
    <location>
        <begin position="31"/>
        <end position="124"/>
    </location>
</feature>
<feature type="glycosylation site" description="N-linked (GlcNAc...) asparagine" evidence="2">
    <location>
        <position position="171"/>
    </location>
</feature>
<keyword id="KW-0256">Endoplasmic reticulum</keyword>
<keyword id="KW-0931">ER-Golgi transport</keyword>
<keyword id="KW-0325">Glycoprotein</keyword>
<keyword id="KW-0472">Membrane</keyword>
<keyword id="KW-0653">Protein transport</keyword>
<keyword id="KW-1185">Reference proteome</keyword>
<keyword id="KW-0732">Signal</keyword>
<keyword id="KW-0812">Transmembrane</keyword>
<keyword id="KW-1133">Transmembrane helix</keyword>
<keyword id="KW-0813">Transport</keyword>
<name>ERP5_YEAST</name>
<comment type="function">
    <text evidence="1">Involved in vesicular protein trafficking.</text>
</comment>
<comment type="interaction">
    <interactant intactId="EBI-6603">
        <id>P38819</id>
    </interactant>
    <interactant intactId="EBI-6642">
        <id>P54837</id>
        <label>ERV25</label>
    </interactant>
    <organismsDiffer>false</organismsDiffer>
    <experiments>4</experiments>
</comment>
<comment type="subcellular location">
    <subcellularLocation>
        <location evidence="1">Endoplasmic reticulum membrane</location>
        <topology evidence="1">Single-pass type I membrane protein</topology>
    </subcellularLocation>
</comment>
<comment type="similarity">
    <text evidence="4">Belongs to the EMP24/GP25L family.</text>
</comment>
<accession>P38819</accession>
<accession>D3DL60</accession>
<organism>
    <name type="scientific">Saccharomyces cerevisiae (strain ATCC 204508 / S288c)</name>
    <name type="common">Baker's yeast</name>
    <dbReference type="NCBI Taxonomy" id="559292"/>
    <lineage>
        <taxon>Eukaryota</taxon>
        <taxon>Fungi</taxon>
        <taxon>Dikarya</taxon>
        <taxon>Ascomycota</taxon>
        <taxon>Saccharomycotina</taxon>
        <taxon>Saccharomycetes</taxon>
        <taxon>Saccharomycetales</taxon>
        <taxon>Saccharomycetaceae</taxon>
        <taxon>Saccharomyces</taxon>
    </lineage>
</organism>
<protein>
    <recommendedName>
        <fullName>Protein ERP5</fullName>
    </recommendedName>
</protein>